<organism>
    <name type="scientific">Mus musculus</name>
    <name type="common">Mouse</name>
    <dbReference type="NCBI Taxonomy" id="10090"/>
    <lineage>
        <taxon>Eukaryota</taxon>
        <taxon>Metazoa</taxon>
        <taxon>Chordata</taxon>
        <taxon>Craniata</taxon>
        <taxon>Vertebrata</taxon>
        <taxon>Euteleostomi</taxon>
        <taxon>Mammalia</taxon>
        <taxon>Eutheria</taxon>
        <taxon>Euarchontoglires</taxon>
        <taxon>Glires</taxon>
        <taxon>Rodentia</taxon>
        <taxon>Myomorpha</taxon>
        <taxon>Muroidea</taxon>
        <taxon>Muridae</taxon>
        <taxon>Murinae</taxon>
        <taxon>Mus</taxon>
        <taxon>Mus</taxon>
    </lineage>
</organism>
<reference key="1">
    <citation type="journal article" date="2004" name="Genome Res.">
        <title>The status, quality, and expansion of the NIH full-length cDNA project: the Mammalian Gene Collection (MGC).</title>
        <authorList>
            <consortium name="The MGC Project Team"/>
        </authorList>
    </citation>
    <scope>NUCLEOTIDE SEQUENCE [LARGE SCALE MRNA]</scope>
    <source>
        <strain>C57BL/6J</strain>
        <tissue>Brain</tissue>
    </source>
</reference>
<reference key="2">
    <citation type="journal article" date="2004" name="DNA Res.">
        <title>Prediction of the coding sequences of mouse homologues of KIAA gene: IV. The complete nucleotide sequences of 500 mouse KIAA-homologous cDNAs identified by screening of terminal sequences of cDNA clones randomly sampled from size-fractionated libraries.</title>
        <authorList>
            <person name="Okazaki N."/>
            <person name="Kikuno R."/>
            <person name="Ohara R."/>
            <person name="Inamoto S."/>
            <person name="Koseki H."/>
            <person name="Hiraoka S."/>
            <person name="Saga Y."/>
            <person name="Seino S."/>
            <person name="Nishimura M."/>
            <person name="Kaisho T."/>
            <person name="Hoshino K."/>
            <person name="Kitamura H."/>
            <person name="Nagase T."/>
            <person name="Ohara O."/>
            <person name="Koga H."/>
        </authorList>
    </citation>
    <scope>NUCLEOTIDE SEQUENCE [LARGE SCALE MRNA] OF 242-980</scope>
    <source>
        <tissue>Embryonic intestine</tissue>
    </source>
</reference>
<reference key="3">
    <citation type="journal article" date="2010" name="Cell">
        <title>A tissue-specific atlas of mouse protein phosphorylation and expression.</title>
        <authorList>
            <person name="Huttlin E.L."/>
            <person name="Jedrychowski M.P."/>
            <person name="Elias J.E."/>
            <person name="Goswami T."/>
            <person name="Rad R."/>
            <person name="Beausoleil S.A."/>
            <person name="Villen J."/>
            <person name="Haas W."/>
            <person name="Sowa M.E."/>
            <person name="Gygi S.P."/>
        </authorList>
    </citation>
    <scope>IDENTIFICATION BY MASS SPECTROMETRY [LARGE SCALE ANALYSIS]</scope>
    <source>
        <tissue>Brain</tissue>
        <tissue>Brown adipose tissue</tissue>
        <tissue>Heart</tissue>
        <tissue>Kidney</tissue>
        <tissue>Liver</tissue>
        <tissue>Spleen</tissue>
        <tissue>Testis</tissue>
    </source>
</reference>
<reference key="4">
    <citation type="journal article" date="2024" name="Nature">
        <title>AARS1 and AARS2 sense L-lactate to regulate cGAS as global lysine lactyltransferases.</title>
        <authorList>
            <person name="Li H."/>
            <person name="Liu C."/>
            <person name="Li R."/>
            <person name="Zhou L."/>
            <person name="Ran Y."/>
            <person name="Yang Q."/>
            <person name="Huang H."/>
            <person name="Lu H."/>
            <person name="Song H."/>
            <person name="Yang B."/>
            <person name="Ru H."/>
            <person name="Lin S."/>
            <person name="Zhang L."/>
        </authorList>
    </citation>
    <scope>FUNCTION</scope>
</reference>
<evidence type="ECO:0000250" key="1">
    <source>
        <dbReference type="UniProtKB" id="P49588"/>
    </source>
</evidence>
<evidence type="ECO:0000255" key="2">
    <source>
        <dbReference type="HAMAP-Rule" id="MF_03133"/>
    </source>
</evidence>
<evidence type="ECO:0000269" key="3">
    <source>
    </source>
</evidence>
<evidence type="ECO:0000305" key="4"/>
<name>SYAM_MOUSE</name>
<accession>Q14CH7</accession>
<accession>Q68FH3</accession>
<accession>Q69ZM9</accession>
<feature type="transit peptide" description="Mitochondrion" evidence="2">
    <location>
        <begin position="1"/>
        <end position="23"/>
    </location>
</feature>
<feature type="chain" id="PRO_0000250726" description="Alanine--tRNA ligase, mitochondrial">
    <location>
        <begin position="24"/>
        <end position="980"/>
    </location>
</feature>
<feature type="binding site" evidence="1">
    <location>
        <position position="105"/>
    </location>
    <ligand>
        <name>ATP</name>
        <dbReference type="ChEBI" id="CHEBI:30616"/>
    </ligand>
</feature>
<feature type="binding site" evidence="1">
    <location>
        <position position="123"/>
    </location>
    <ligand>
        <name>ATP</name>
        <dbReference type="ChEBI" id="CHEBI:30616"/>
    </ligand>
</feature>
<feature type="binding site" evidence="1">
    <location>
        <position position="205"/>
    </location>
    <ligand>
        <name>ATP</name>
        <dbReference type="ChEBI" id="CHEBI:30616"/>
    </ligand>
</feature>
<feature type="binding site" evidence="1">
    <location>
        <begin position="235"/>
        <end position="237"/>
    </location>
    <ligand>
        <name>ATP</name>
        <dbReference type="ChEBI" id="CHEBI:30616"/>
    </ligand>
</feature>
<feature type="binding site" evidence="1">
    <location>
        <position position="237"/>
    </location>
    <ligand>
        <name>L-alanine</name>
        <dbReference type="ChEBI" id="CHEBI:57972"/>
    </ligand>
</feature>
<feature type="binding site" evidence="1">
    <location>
        <position position="260"/>
    </location>
    <ligand>
        <name>L-alanine</name>
        <dbReference type="ChEBI" id="CHEBI:57972"/>
    </ligand>
</feature>
<feature type="binding site" evidence="1">
    <location>
        <position position="264"/>
    </location>
    <ligand>
        <name>ATP</name>
        <dbReference type="ChEBI" id="CHEBI:30616"/>
    </ligand>
</feature>
<feature type="binding site" evidence="2">
    <location>
        <position position="627"/>
    </location>
    <ligand>
        <name>Zn(2+)</name>
        <dbReference type="ChEBI" id="CHEBI:29105"/>
    </ligand>
</feature>
<feature type="binding site" evidence="2">
    <location>
        <position position="631"/>
    </location>
    <ligand>
        <name>Zn(2+)</name>
        <dbReference type="ChEBI" id="CHEBI:29105"/>
    </ligand>
</feature>
<feature type="binding site" evidence="2">
    <location>
        <position position="744"/>
    </location>
    <ligand>
        <name>Zn(2+)</name>
        <dbReference type="ChEBI" id="CHEBI:29105"/>
    </ligand>
</feature>
<feature type="binding site" evidence="2">
    <location>
        <position position="748"/>
    </location>
    <ligand>
        <name>Zn(2+)</name>
        <dbReference type="ChEBI" id="CHEBI:29105"/>
    </ligand>
</feature>
<feature type="sequence conflict" description="In Ref. 2; BAD32417." evidence="4" ref="2">
    <original>AWRMGCMV</original>
    <variation>RSRPG</variation>
    <location>
        <begin position="618"/>
        <end position="625"/>
    </location>
</feature>
<keyword id="KW-0030">Aminoacyl-tRNA synthetase</keyword>
<keyword id="KW-0067">ATP-binding</keyword>
<keyword id="KW-0436">Ligase</keyword>
<keyword id="KW-0479">Metal-binding</keyword>
<keyword id="KW-0496">Mitochondrion</keyword>
<keyword id="KW-0547">Nucleotide-binding</keyword>
<keyword id="KW-0648">Protein biosynthesis</keyword>
<keyword id="KW-1185">Reference proteome</keyword>
<keyword id="KW-0694">RNA-binding</keyword>
<keyword id="KW-0809">Transit peptide</keyword>
<keyword id="KW-0820">tRNA-binding</keyword>
<keyword id="KW-0862">Zinc</keyword>
<dbReference type="EC" id="6.1.1.7" evidence="2"/>
<dbReference type="EC" id="6.-.-.-" evidence="2"/>
<dbReference type="EMBL" id="BC079844">
    <property type="protein sequence ID" value="AAH79844.1"/>
    <property type="molecule type" value="mRNA"/>
</dbReference>
<dbReference type="EMBL" id="BC113172">
    <property type="protein sequence ID" value="AAI13173.1"/>
    <property type="molecule type" value="mRNA"/>
</dbReference>
<dbReference type="EMBL" id="BC113779">
    <property type="protein sequence ID" value="AAI13780.1"/>
    <property type="molecule type" value="mRNA"/>
</dbReference>
<dbReference type="EMBL" id="AK173139">
    <property type="protein sequence ID" value="BAD32417.1"/>
    <property type="molecule type" value="Transcribed_RNA"/>
</dbReference>
<dbReference type="CCDS" id="CCDS28809.1"/>
<dbReference type="RefSeq" id="NP_941010.2">
    <property type="nucleotide sequence ID" value="NM_198608.2"/>
</dbReference>
<dbReference type="SMR" id="Q14CH7"/>
<dbReference type="BioGRID" id="230321">
    <property type="interactions" value="9"/>
</dbReference>
<dbReference type="FunCoup" id="Q14CH7">
    <property type="interactions" value="785"/>
</dbReference>
<dbReference type="IntAct" id="Q14CH7">
    <property type="interactions" value="1"/>
</dbReference>
<dbReference type="MINT" id="Q14CH7"/>
<dbReference type="STRING" id="10090.ENSMUSP00000024733"/>
<dbReference type="iPTMnet" id="Q14CH7"/>
<dbReference type="PhosphoSitePlus" id="Q14CH7"/>
<dbReference type="SwissPalm" id="Q14CH7"/>
<dbReference type="PaxDb" id="10090-ENSMUSP00000024733"/>
<dbReference type="PeptideAtlas" id="Q14CH7"/>
<dbReference type="ProteomicsDB" id="254615"/>
<dbReference type="Pumba" id="Q14CH7"/>
<dbReference type="Antibodypedia" id="46060">
    <property type="antibodies" value="129 antibodies from 27 providers"/>
</dbReference>
<dbReference type="DNASU" id="224805"/>
<dbReference type="Ensembl" id="ENSMUST00000024733.9">
    <property type="protein sequence ID" value="ENSMUSP00000024733.8"/>
    <property type="gene ID" value="ENSMUSG00000023938.9"/>
</dbReference>
<dbReference type="GeneID" id="224805"/>
<dbReference type="KEGG" id="mmu:224805"/>
<dbReference type="UCSC" id="uc008cqr.1">
    <property type="organism name" value="mouse"/>
</dbReference>
<dbReference type="AGR" id="MGI:2681839"/>
<dbReference type="CTD" id="57505"/>
<dbReference type="MGI" id="MGI:2681839">
    <property type="gene designation" value="Aars2"/>
</dbReference>
<dbReference type="VEuPathDB" id="HostDB:ENSMUSG00000023938"/>
<dbReference type="eggNOG" id="KOG0188">
    <property type="taxonomic scope" value="Eukaryota"/>
</dbReference>
<dbReference type="GeneTree" id="ENSGT00940000158246"/>
<dbReference type="HOGENOM" id="CLU_004485_5_0_1"/>
<dbReference type="InParanoid" id="Q14CH7"/>
<dbReference type="OMA" id="NCLEIWN"/>
<dbReference type="OrthoDB" id="2423964at2759"/>
<dbReference type="PhylomeDB" id="Q14CH7"/>
<dbReference type="TreeFam" id="TF300737"/>
<dbReference type="BioGRID-ORCS" id="224805">
    <property type="hits" value="26 hits in 79 CRISPR screens"/>
</dbReference>
<dbReference type="ChiTaRS" id="Aars2">
    <property type="organism name" value="mouse"/>
</dbReference>
<dbReference type="PRO" id="PR:Q14CH7"/>
<dbReference type="Proteomes" id="UP000000589">
    <property type="component" value="Chromosome 17"/>
</dbReference>
<dbReference type="RNAct" id="Q14CH7">
    <property type="molecule type" value="protein"/>
</dbReference>
<dbReference type="Bgee" id="ENSMUSG00000023938">
    <property type="expression patterns" value="Expressed in otolith organ and 201 other cell types or tissues"/>
</dbReference>
<dbReference type="GO" id="GO:0005739">
    <property type="term" value="C:mitochondrion"/>
    <property type="evidence" value="ECO:0007005"/>
    <property type="project" value="MGI"/>
</dbReference>
<dbReference type="GO" id="GO:0004813">
    <property type="term" value="F:alanine-tRNA ligase activity"/>
    <property type="evidence" value="ECO:0007669"/>
    <property type="project" value="UniProtKB-UniRule"/>
</dbReference>
<dbReference type="GO" id="GO:0005524">
    <property type="term" value="F:ATP binding"/>
    <property type="evidence" value="ECO:0007669"/>
    <property type="project" value="UniProtKB-UniRule"/>
</dbReference>
<dbReference type="GO" id="GO:0141207">
    <property type="term" value="F:peptide lactyltransferase (ATP-dependent) activity"/>
    <property type="evidence" value="ECO:0000314"/>
    <property type="project" value="UniProtKB"/>
</dbReference>
<dbReference type="GO" id="GO:0000049">
    <property type="term" value="F:tRNA binding"/>
    <property type="evidence" value="ECO:0007669"/>
    <property type="project" value="UniProtKB-KW"/>
</dbReference>
<dbReference type="GO" id="GO:0008270">
    <property type="term" value="F:zinc ion binding"/>
    <property type="evidence" value="ECO:0007669"/>
    <property type="project" value="UniProtKB-UniRule"/>
</dbReference>
<dbReference type="GO" id="GO:0070143">
    <property type="term" value="P:mitochondrial alanyl-tRNA aminoacylation"/>
    <property type="evidence" value="ECO:0007669"/>
    <property type="project" value="Ensembl"/>
</dbReference>
<dbReference type="GO" id="GO:0160049">
    <property type="term" value="P:negative regulation of cGAS/STING signaling pathway"/>
    <property type="evidence" value="ECO:0000314"/>
    <property type="project" value="UniProtKB"/>
</dbReference>
<dbReference type="CDD" id="cd00673">
    <property type="entry name" value="AlaRS_core"/>
    <property type="match status" value="1"/>
</dbReference>
<dbReference type="FunFam" id="3.30.930.10:FF:000011">
    <property type="entry name" value="Alanine--tRNA ligase, cytoplasmic"/>
    <property type="match status" value="1"/>
</dbReference>
<dbReference type="FunFam" id="3.30.980.10:FF:000004">
    <property type="entry name" value="Alanine--tRNA ligase, cytoplasmic"/>
    <property type="match status" value="1"/>
</dbReference>
<dbReference type="FunFam" id="2.40.30.130:FF:000005">
    <property type="entry name" value="Alanyl-tRNA synthetase 2, mitochondrial"/>
    <property type="match status" value="1"/>
</dbReference>
<dbReference type="FunFam" id="3.10.310.40:FF:000004">
    <property type="entry name" value="Alanyl-tRNA synthetase 2, mitochondrial"/>
    <property type="match status" value="1"/>
</dbReference>
<dbReference type="Gene3D" id="2.40.30.130">
    <property type="match status" value="1"/>
</dbReference>
<dbReference type="Gene3D" id="3.10.310.40">
    <property type="match status" value="1"/>
</dbReference>
<dbReference type="Gene3D" id="3.30.930.10">
    <property type="entry name" value="Bira Bifunctional Protein, Domain 2"/>
    <property type="match status" value="1"/>
</dbReference>
<dbReference type="Gene3D" id="3.30.980.10">
    <property type="entry name" value="Threonyl-trna Synthetase, Chain A, domain 2"/>
    <property type="match status" value="1"/>
</dbReference>
<dbReference type="HAMAP" id="MF_00036_B">
    <property type="entry name" value="Ala_tRNA_synth_B"/>
    <property type="match status" value="1"/>
</dbReference>
<dbReference type="InterPro" id="IPR045864">
    <property type="entry name" value="aa-tRNA-synth_II/BPL/LPL"/>
</dbReference>
<dbReference type="InterPro" id="IPR002318">
    <property type="entry name" value="Ala-tRNA-lgiase_IIc"/>
</dbReference>
<dbReference type="InterPro" id="IPR018162">
    <property type="entry name" value="Ala-tRNA-ligase_IIc_anticod-bd"/>
</dbReference>
<dbReference type="InterPro" id="IPR018165">
    <property type="entry name" value="Ala-tRNA-synth_IIc_core"/>
</dbReference>
<dbReference type="InterPro" id="IPR018164">
    <property type="entry name" value="Ala-tRNA-synth_IIc_N"/>
</dbReference>
<dbReference type="InterPro" id="IPR050058">
    <property type="entry name" value="Ala-tRNA_ligase"/>
</dbReference>
<dbReference type="InterPro" id="IPR023033">
    <property type="entry name" value="Ala_tRNA_ligase_euk/bac"/>
</dbReference>
<dbReference type="InterPro" id="IPR018163">
    <property type="entry name" value="Thr/Ala-tRNA-synth_IIc_edit"/>
</dbReference>
<dbReference type="InterPro" id="IPR009000">
    <property type="entry name" value="Transl_B-barrel_sf"/>
</dbReference>
<dbReference type="InterPro" id="IPR012947">
    <property type="entry name" value="tRNA_SAD"/>
</dbReference>
<dbReference type="NCBIfam" id="TIGR00344">
    <property type="entry name" value="alaS"/>
    <property type="match status" value="1"/>
</dbReference>
<dbReference type="PANTHER" id="PTHR11777:SF8">
    <property type="entry name" value="ALANINE--TRNA LIGASE, MITOCHONDRIAL"/>
    <property type="match status" value="1"/>
</dbReference>
<dbReference type="PANTHER" id="PTHR11777">
    <property type="entry name" value="ALANYL-TRNA SYNTHETASE"/>
    <property type="match status" value="1"/>
</dbReference>
<dbReference type="Pfam" id="PF01411">
    <property type="entry name" value="tRNA-synt_2c"/>
    <property type="match status" value="1"/>
</dbReference>
<dbReference type="Pfam" id="PF07973">
    <property type="entry name" value="tRNA_SAD"/>
    <property type="match status" value="1"/>
</dbReference>
<dbReference type="PRINTS" id="PR00980">
    <property type="entry name" value="TRNASYNTHALA"/>
</dbReference>
<dbReference type="SMART" id="SM00863">
    <property type="entry name" value="tRNA_SAD"/>
    <property type="match status" value="1"/>
</dbReference>
<dbReference type="SUPFAM" id="SSF55681">
    <property type="entry name" value="Class II aaRS and biotin synthetases"/>
    <property type="match status" value="1"/>
</dbReference>
<dbReference type="SUPFAM" id="SSF101353">
    <property type="entry name" value="Putative anticodon-binding domain of alanyl-tRNA synthetase (AlaRS)"/>
    <property type="match status" value="1"/>
</dbReference>
<dbReference type="SUPFAM" id="SSF55186">
    <property type="entry name" value="ThrRS/AlaRS common domain"/>
    <property type="match status" value="1"/>
</dbReference>
<dbReference type="SUPFAM" id="SSF50447">
    <property type="entry name" value="Translation proteins"/>
    <property type="match status" value="1"/>
</dbReference>
<dbReference type="PROSITE" id="PS50860">
    <property type="entry name" value="AA_TRNA_LIGASE_II_ALA"/>
    <property type="match status" value="1"/>
</dbReference>
<protein>
    <recommendedName>
        <fullName evidence="2">Alanine--tRNA ligase, mitochondrial</fullName>
        <ecNumber evidence="2">6.1.1.7</ecNumber>
    </recommendedName>
    <alternativeName>
        <fullName evidence="2">Alanyl-tRNA synthetase</fullName>
        <shortName evidence="2">AlaRS</shortName>
    </alternativeName>
    <alternativeName>
        <fullName evidence="4">Protein lactyltransferase AARS2</fullName>
        <ecNumber evidence="2">6.-.-.-</ecNumber>
    </alternativeName>
</protein>
<proteinExistence type="evidence at protein level"/>
<gene>
    <name type="primary">Aars2</name>
    <name type="synonym">Aarsl</name>
    <name type="synonym">Gm89</name>
    <name type="synonym">Kiaa1270</name>
</gene>
<sequence length="980" mass="106783">MAVALAAAAGKLRRAIGRSCPWQPFSTEPGPPHGAAVRDAFLSFFRDRHGHRLVPSATVRPRGDPSLLFVNAGMNQFKPIFLGTVDPRSEMAGFRRVVNSQKCVRAGGRHNDLEDVGRDLSHHTFFEMLGNWAFGGEYFKEEACSMAWELLTQVYGIPEDRLWVSYFSGDSQTGLDPDLETRDIWLSLGVPASRVLSFGPQENFWEMGDTGPCGPCTEIHYDLAGGVGSPQLVELWNLVFMQHYREADGSLQLLPQRHVDTGMGLERLVAVLQGKRSTYDTDLFSPLLDAIHQSCGAPPYSGRVGAADEGRIDTAYRVVADHIRTLSVCIADGVSPGMSGAPLVLRRILRRAVRYSTEVLQAPPGFLGSLVPVVVETLGSAYPELEKNSVKIASLVSEDEAAFLASLQRGRRIIDRTVKRLGPSDLFPAEVAWSLSLSGNLGIPLDLVELMLEEKGVKLDTAGLEQLAQKEAQHRAQQAEADQEDRLCLDVHALEELHRQGIPTTDDSPKYNYTLHPNGDYEFGLCEARVLQLYSETGTAVASVGAGQRCGLLLDRTNFYAEQGGQASDRGYLVRTGQQDMLFPVAGAQLCGGFILHEAMAPERLQVGDQVQLYVDKAWRMGCMVKHTATHLLSWALRQTLGPTTEQRGSHLNPERLRFDVATQTLLTTEQLRTVESYVQEVVGQDKPVFMEEVPLAHTARIPGLRSLDEVYPDPVRVVSVGVPVAHALGPASQAAMHTSVELCCGTHLLSTGAVGDLVIIGERQLVKGITRLLAITGEQAQQAREVGQSLSQEVEAASERLSQGSRDLPEAHRLSKDIGRLTEVAESAVIPQWQRQELQTTLKMLQRRANTAIRKLEKGQATEKSQELLKRHSEGPLIVDTVSAESLSVLVKVVRQLCKQAPSISVLLLSPQPTGSVLCACQVAQDATPTFTAEAWALAVCSHMGGKAWGSRVVAQGTGHTADLEAALGTARAYALSQL</sequence>
<comment type="function">
    <text evidence="2 3">Catalyzes the attachment of alanine to tRNA(Ala) in a two-step reaction: alanine is first activated by ATP to form Ala-AMP and then transferred to the acceptor end of tRNA(Ala). Also edits incorrectly charged tRNA(Ala) via its editing domain (By similarity). In presence of high levels of lactate, also acts as a protein lactyltransferase that mediates lactylation of lysine residues in target proteins, such as CGAS (PubMed:39322678). Acts as an inhibitor of cGAS/STING signaling by catalyzing lactylation of CGAS, preventing the formation of liquid-like droplets in which CGAS is activated (PubMed:39322678).</text>
</comment>
<comment type="catalytic activity">
    <reaction evidence="2">
        <text>tRNA(Ala) + L-alanine + ATP = L-alanyl-tRNA(Ala) + AMP + diphosphate</text>
        <dbReference type="Rhea" id="RHEA:12540"/>
        <dbReference type="Rhea" id="RHEA-COMP:9657"/>
        <dbReference type="Rhea" id="RHEA-COMP:9923"/>
        <dbReference type="ChEBI" id="CHEBI:30616"/>
        <dbReference type="ChEBI" id="CHEBI:33019"/>
        <dbReference type="ChEBI" id="CHEBI:57972"/>
        <dbReference type="ChEBI" id="CHEBI:78442"/>
        <dbReference type="ChEBI" id="CHEBI:78497"/>
        <dbReference type="ChEBI" id="CHEBI:456215"/>
        <dbReference type="EC" id="6.1.1.7"/>
    </reaction>
</comment>
<comment type="catalytic activity">
    <reaction evidence="2">
        <text>(S)-lactate + ATP + H(+) = (S)-lactoyl-AMP + diphosphate</text>
        <dbReference type="Rhea" id="RHEA:80271"/>
        <dbReference type="ChEBI" id="CHEBI:15378"/>
        <dbReference type="ChEBI" id="CHEBI:16651"/>
        <dbReference type="ChEBI" id="CHEBI:30616"/>
        <dbReference type="ChEBI" id="CHEBI:33019"/>
        <dbReference type="ChEBI" id="CHEBI:231470"/>
    </reaction>
    <physiologicalReaction direction="left-to-right" evidence="2">
        <dbReference type="Rhea" id="RHEA:80272"/>
    </physiologicalReaction>
</comment>
<comment type="catalytic activity">
    <reaction evidence="2">
        <text>(S)-lactoyl-AMP + L-lysyl-[protein] = N(6)-[(S)-lactoyl]-L-lysyl-[protein] + AMP + 2 H(+)</text>
        <dbReference type="Rhea" id="RHEA:80275"/>
        <dbReference type="Rhea" id="RHEA-COMP:9752"/>
        <dbReference type="Rhea" id="RHEA-COMP:19466"/>
        <dbReference type="ChEBI" id="CHEBI:15378"/>
        <dbReference type="ChEBI" id="CHEBI:29969"/>
        <dbReference type="ChEBI" id="CHEBI:231470"/>
        <dbReference type="ChEBI" id="CHEBI:231527"/>
        <dbReference type="ChEBI" id="CHEBI:456215"/>
    </reaction>
    <physiologicalReaction direction="left-to-right" evidence="2">
        <dbReference type="Rhea" id="RHEA:80276"/>
    </physiologicalReaction>
</comment>
<comment type="cofactor">
    <cofactor evidence="2">
        <name>Zn(2+)</name>
        <dbReference type="ChEBI" id="CHEBI:29105"/>
    </cofactor>
    <text evidence="2">Binds 1 zinc ion per subunit.</text>
</comment>
<comment type="subunit">
    <text evidence="2">Monomer.</text>
</comment>
<comment type="subcellular location">
    <subcellularLocation>
        <location>Mitochondrion</location>
    </subcellularLocation>
</comment>
<comment type="domain">
    <text evidence="2">Consists of three domains; the N-terminal catalytic domain, the editing domain and the C-terminal C-Ala domain. The editing domain removes incorrectly charged amino acids, while the C-Ala domain, along with tRNA(Ala), serves as a bridge to cooperatively bring together the editing and aminoacylation centers thus stimulating deacylation of misacylated tRNAs.</text>
</comment>
<comment type="similarity">
    <text evidence="2">Belongs to the class-II aminoacyl-tRNA synthetase family.</text>
</comment>